<name>Y1072_METJA</name>
<proteinExistence type="inferred from homology"/>
<evidence type="ECO:0000255" key="1"/>
<evidence type="ECO:0000305" key="2"/>
<comment type="subcellular location">
    <subcellularLocation>
        <location evidence="2">Membrane</location>
        <topology evidence="2">Single-pass membrane protein</topology>
    </subcellularLocation>
</comment>
<comment type="similarity">
    <text evidence="2">Belongs to the M.jannaschii MJ0023/MJ0349/MJ1072/MJ1074/MJ1107/MJECL16 family.</text>
</comment>
<protein>
    <recommendedName>
        <fullName>Uncharacterized protein MJ1072</fullName>
    </recommendedName>
</protein>
<dbReference type="EMBL" id="L77117">
    <property type="protein sequence ID" value="AAB99079.1"/>
    <property type="molecule type" value="Genomic_DNA"/>
</dbReference>
<dbReference type="PIR" id="G64433">
    <property type="entry name" value="G64433"/>
</dbReference>
<dbReference type="SMR" id="Q58472"/>
<dbReference type="STRING" id="243232.MJ_1072"/>
<dbReference type="PaxDb" id="243232-MJ_1072"/>
<dbReference type="EnsemblBacteria" id="AAB99079">
    <property type="protein sequence ID" value="AAB99079"/>
    <property type="gene ID" value="MJ_1072"/>
</dbReference>
<dbReference type="KEGG" id="mja:MJ_1072"/>
<dbReference type="eggNOG" id="arCOG09652">
    <property type="taxonomic scope" value="Archaea"/>
</dbReference>
<dbReference type="HOGENOM" id="CLU_165881_0_0_2"/>
<dbReference type="InParanoid" id="Q58472"/>
<dbReference type="PhylomeDB" id="Q58472"/>
<dbReference type="Proteomes" id="UP000000805">
    <property type="component" value="Chromosome"/>
</dbReference>
<dbReference type="GO" id="GO:0016020">
    <property type="term" value="C:membrane"/>
    <property type="evidence" value="ECO:0007669"/>
    <property type="project" value="UniProtKB-SubCell"/>
</dbReference>
<reference key="1">
    <citation type="journal article" date="1996" name="Science">
        <title>Complete genome sequence of the methanogenic archaeon, Methanococcus jannaschii.</title>
        <authorList>
            <person name="Bult C.J."/>
            <person name="White O."/>
            <person name="Olsen G.J."/>
            <person name="Zhou L."/>
            <person name="Fleischmann R.D."/>
            <person name="Sutton G.G."/>
            <person name="Blake J.A."/>
            <person name="FitzGerald L.M."/>
            <person name="Clayton R.A."/>
            <person name="Gocayne J.D."/>
            <person name="Kerlavage A.R."/>
            <person name="Dougherty B.A."/>
            <person name="Tomb J.-F."/>
            <person name="Adams M.D."/>
            <person name="Reich C.I."/>
            <person name="Overbeek R."/>
            <person name="Kirkness E.F."/>
            <person name="Weinstock K.G."/>
            <person name="Merrick J.M."/>
            <person name="Glodek A."/>
            <person name="Scott J.L."/>
            <person name="Geoghagen N.S.M."/>
            <person name="Weidman J.F."/>
            <person name="Fuhrmann J.L."/>
            <person name="Nguyen D."/>
            <person name="Utterback T.R."/>
            <person name="Kelley J.M."/>
            <person name="Peterson J.D."/>
            <person name="Sadow P.W."/>
            <person name="Hanna M.C."/>
            <person name="Cotton M.D."/>
            <person name="Roberts K.M."/>
            <person name="Hurst M.A."/>
            <person name="Kaine B.P."/>
            <person name="Borodovsky M."/>
            <person name="Klenk H.-P."/>
            <person name="Fraser C.M."/>
            <person name="Smith H.O."/>
            <person name="Woese C.R."/>
            <person name="Venter J.C."/>
        </authorList>
    </citation>
    <scope>NUCLEOTIDE SEQUENCE [LARGE SCALE GENOMIC DNA]</scope>
    <source>
        <strain>ATCC 43067 / DSM 2661 / JAL-1 / JCM 10045 / NBRC 100440</strain>
    </source>
</reference>
<keyword id="KW-0472">Membrane</keyword>
<keyword id="KW-1185">Reference proteome</keyword>
<keyword id="KW-0812">Transmembrane</keyword>
<keyword id="KW-1133">Transmembrane helix</keyword>
<accession>Q58472</accession>
<feature type="chain" id="PRO_0000107158" description="Uncharacterized protein MJ1072">
    <location>
        <begin position="1"/>
        <end position="116"/>
    </location>
</feature>
<feature type="transmembrane region" description="Helical" evidence="1">
    <location>
        <begin position="89"/>
        <end position="109"/>
    </location>
</feature>
<organism>
    <name type="scientific">Methanocaldococcus jannaschii (strain ATCC 43067 / DSM 2661 / JAL-1 / JCM 10045 / NBRC 100440)</name>
    <name type="common">Methanococcus jannaschii</name>
    <dbReference type="NCBI Taxonomy" id="243232"/>
    <lineage>
        <taxon>Archaea</taxon>
        <taxon>Methanobacteriati</taxon>
        <taxon>Methanobacteriota</taxon>
        <taxon>Methanomada group</taxon>
        <taxon>Methanococci</taxon>
        <taxon>Methanococcales</taxon>
        <taxon>Methanocaldococcaceae</taxon>
        <taxon>Methanocaldococcus</taxon>
    </lineage>
</organism>
<sequence>MIYFGGIMAIAYAKLYEIIAKYIKDEKRAEELYNAVVEVIKEEKIIVKHELKDELKNELATKEDIMLAEERILRYVDNRFNQLDKKMTVGFVILILLYILTNPNAIELIKLLFGVK</sequence>
<gene>
    <name type="ordered locus">MJ1072</name>
</gene>